<gene>
    <name evidence="1" type="primary">mraY</name>
    <name type="ordered locus">M446_0258</name>
</gene>
<accession>B0UFH5</accession>
<proteinExistence type="inferred from homology"/>
<evidence type="ECO:0000255" key="1">
    <source>
        <dbReference type="HAMAP-Rule" id="MF_00038"/>
    </source>
</evidence>
<name>MRAY_METS4</name>
<dbReference type="EC" id="2.7.8.13" evidence="1"/>
<dbReference type="EMBL" id="CP000943">
    <property type="protein sequence ID" value="ACA14829.1"/>
    <property type="molecule type" value="Genomic_DNA"/>
</dbReference>
<dbReference type="RefSeq" id="WP_012330247.1">
    <property type="nucleotide sequence ID" value="NC_010511.1"/>
</dbReference>
<dbReference type="SMR" id="B0UFH5"/>
<dbReference type="STRING" id="426117.M446_0258"/>
<dbReference type="KEGG" id="met:M446_0258"/>
<dbReference type="eggNOG" id="COG0472">
    <property type="taxonomic scope" value="Bacteria"/>
</dbReference>
<dbReference type="HOGENOM" id="CLU_023982_0_0_5"/>
<dbReference type="UniPathway" id="UPA00219"/>
<dbReference type="GO" id="GO:0005886">
    <property type="term" value="C:plasma membrane"/>
    <property type="evidence" value="ECO:0007669"/>
    <property type="project" value="UniProtKB-SubCell"/>
</dbReference>
<dbReference type="GO" id="GO:0046872">
    <property type="term" value="F:metal ion binding"/>
    <property type="evidence" value="ECO:0007669"/>
    <property type="project" value="UniProtKB-KW"/>
</dbReference>
<dbReference type="GO" id="GO:0008963">
    <property type="term" value="F:phospho-N-acetylmuramoyl-pentapeptide-transferase activity"/>
    <property type="evidence" value="ECO:0007669"/>
    <property type="project" value="UniProtKB-UniRule"/>
</dbReference>
<dbReference type="GO" id="GO:0051992">
    <property type="term" value="F:UDP-N-acetylmuramoyl-L-alanyl-D-glutamyl-meso-2,6-diaminopimelyl-D-alanyl-D-alanine:undecaprenyl-phosphate transferase activity"/>
    <property type="evidence" value="ECO:0007669"/>
    <property type="project" value="RHEA"/>
</dbReference>
<dbReference type="GO" id="GO:0051301">
    <property type="term" value="P:cell division"/>
    <property type="evidence" value="ECO:0007669"/>
    <property type="project" value="UniProtKB-KW"/>
</dbReference>
<dbReference type="GO" id="GO:0071555">
    <property type="term" value="P:cell wall organization"/>
    <property type="evidence" value="ECO:0007669"/>
    <property type="project" value="UniProtKB-KW"/>
</dbReference>
<dbReference type="GO" id="GO:0009252">
    <property type="term" value="P:peptidoglycan biosynthetic process"/>
    <property type="evidence" value="ECO:0007669"/>
    <property type="project" value="UniProtKB-UniRule"/>
</dbReference>
<dbReference type="GO" id="GO:0008360">
    <property type="term" value="P:regulation of cell shape"/>
    <property type="evidence" value="ECO:0007669"/>
    <property type="project" value="UniProtKB-KW"/>
</dbReference>
<dbReference type="CDD" id="cd06852">
    <property type="entry name" value="GT_MraY"/>
    <property type="match status" value="1"/>
</dbReference>
<dbReference type="HAMAP" id="MF_00038">
    <property type="entry name" value="MraY"/>
    <property type="match status" value="1"/>
</dbReference>
<dbReference type="InterPro" id="IPR000715">
    <property type="entry name" value="Glycosyl_transferase_4"/>
</dbReference>
<dbReference type="InterPro" id="IPR003524">
    <property type="entry name" value="PNAcMuramoyl-5peptid_Trfase"/>
</dbReference>
<dbReference type="InterPro" id="IPR018480">
    <property type="entry name" value="PNAcMuramoyl-5peptid_Trfase_CS"/>
</dbReference>
<dbReference type="NCBIfam" id="TIGR00445">
    <property type="entry name" value="mraY"/>
    <property type="match status" value="1"/>
</dbReference>
<dbReference type="PANTHER" id="PTHR22926">
    <property type="entry name" value="PHOSPHO-N-ACETYLMURAMOYL-PENTAPEPTIDE-TRANSFERASE"/>
    <property type="match status" value="1"/>
</dbReference>
<dbReference type="PANTHER" id="PTHR22926:SF5">
    <property type="entry name" value="PHOSPHO-N-ACETYLMURAMOYL-PENTAPEPTIDE-TRANSFERASE HOMOLOG"/>
    <property type="match status" value="1"/>
</dbReference>
<dbReference type="Pfam" id="PF00953">
    <property type="entry name" value="Glycos_transf_4"/>
    <property type="match status" value="1"/>
</dbReference>
<dbReference type="Pfam" id="PF10555">
    <property type="entry name" value="MraY_sig1"/>
    <property type="match status" value="1"/>
</dbReference>
<dbReference type="PROSITE" id="PS01347">
    <property type="entry name" value="MRAY_1"/>
    <property type="match status" value="1"/>
</dbReference>
<dbReference type="PROSITE" id="PS01348">
    <property type="entry name" value="MRAY_2"/>
    <property type="match status" value="1"/>
</dbReference>
<sequence length="361" mass="38875">MLYLLSELSGVFSPFNVFRYITFRTGGALFTAGLFVFWFGPWIISLLRLRQGKGQPIREDGPQTHLLTKRGTPTMGGLMILAGLLVAVFLWANPRNSYVWITVVVTLGFGAIGFYDDYLKVTKQSHKGFSGKFRLGLEALIAVAACVAVAEYSAPGLAYRLAFPVFKDAIVNLGLFWIFFASFVIVGAGNAVNITDGLDGLAIVPVMIAAATFGIIAYLVGNVIYASYLQVNYVPGTGELAVVCGALIGAGLGFLWFNAPPAQIFMGDTGSLALGGLLGTVAVATKHEIVLAVVGGLFVLEIASVIIQVASFKLTGKRVFRMAPIHHHFEQKGWKEPQVVIRFWIIAVVLALLGLATLKLR</sequence>
<comment type="function">
    <text evidence="1">Catalyzes the initial step of the lipid cycle reactions in the biosynthesis of the cell wall peptidoglycan: transfers peptidoglycan precursor phospho-MurNAc-pentapeptide from UDP-MurNAc-pentapeptide onto the lipid carrier undecaprenyl phosphate, yielding undecaprenyl-pyrophosphoryl-MurNAc-pentapeptide, known as lipid I.</text>
</comment>
<comment type="catalytic activity">
    <reaction evidence="1">
        <text>UDP-N-acetyl-alpha-D-muramoyl-L-alanyl-gamma-D-glutamyl-meso-2,6-diaminopimeloyl-D-alanyl-D-alanine + di-trans,octa-cis-undecaprenyl phosphate = di-trans,octa-cis-undecaprenyl diphospho-N-acetyl-alpha-D-muramoyl-L-alanyl-D-glutamyl-meso-2,6-diaminopimeloyl-D-alanyl-D-alanine + UMP</text>
        <dbReference type="Rhea" id="RHEA:28386"/>
        <dbReference type="ChEBI" id="CHEBI:57865"/>
        <dbReference type="ChEBI" id="CHEBI:60392"/>
        <dbReference type="ChEBI" id="CHEBI:61386"/>
        <dbReference type="ChEBI" id="CHEBI:61387"/>
        <dbReference type="EC" id="2.7.8.13"/>
    </reaction>
</comment>
<comment type="cofactor">
    <cofactor evidence="1">
        <name>Mg(2+)</name>
        <dbReference type="ChEBI" id="CHEBI:18420"/>
    </cofactor>
</comment>
<comment type="pathway">
    <text evidence="1">Cell wall biogenesis; peptidoglycan biosynthesis.</text>
</comment>
<comment type="subcellular location">
    <subcellularLocation>
        <location evidence="1">Cell inner membrane</location>
        <topology evidence="1">Multi-pass membrane protein</topology>
    </subcellularLocation>
</comment>
<comment type="similarity">
    <text evidence="1">Belongs to the glycosyltransferase 4 family. MraY subfamily.</text>
</comment>
<keyword id="KW-0131">Cell cycle</keyword>
<keyword id="KW-0132">Cell division</keyword>
<keyword id="KW-0997">Cell inner membrane</keyword>
<keyword id="KW-1003">Cell membrane</keyword>
<keyword id="KW-0133">Cell shape</keyword>
<keyword id="KW-0961">Cell wall biogenesis/degradation</keyword>
<keyword id="KW-0460">Magnesium</keyword>
<keyword id="KW-0472">Membrane</keyword>
<keyword id="KW-0479">Metal-binding</keyword>
<keyword id="KW-0573">Peptidoglycan synthesis</keyword>
<keyword id="KW-0808">Transferase</keyword>
<keyword id="KW-0812">Transmembrane</keyword>
<keyword id="KW-1133">Transmembrane helix</keyword>
<feature type="chain" id="PRO_1000090645" description="Phospho-N-acetylmuramoyl-pentapeptide-transferase">
    <location>
        <begin position="1"/>
        <end position="361"/>
    </location>
</feature>
<feature type="transmembrane region" description="Helical" evidence="1">
    <location>
        <begin position="27"/>
        <end position="47"/>
    </location>
</feature>
<feature type="transmembrane region" description="Helical" evidence="1">
    <location>
        <begin position="72"/>
        <end position="92"/>
    </location>
</feature>
<feature type="transmembrane region" description="Helical" evidence="1">
    <location>
        <begin position="99"/>
        <end position="119"/>
    </location>
</feature>
<feature type="transmembrane region" description="Helical" evidence="1">
    <location>
        <begin position="139"/>
        <end position="159"/>
    </location>
</feature>
<feature type="transmembrane region" description="Helical" evidence="1">
    <location>
        <begin position="169"/>
        <end position="189"/>
    </location>
</feature>
<feature type="transmembrane region" description="Helical" evidence="1">
    <location>
        <begin position="200"/>
        <end position="220"/>
    </location>
</feature>
<feature type="transmembrane region" description="Helical" evidence="1">
    <location>
        <begin position="240"/>
        <end position="260"/>
    </location>
</feature>
<feature type="transmembrane region" description="Helical" evidence="1">
    <location>
        <begin position="264"/>
        <end position="284"/>
    </location>
</feature>
<feature type="transmembrane region" description="Helical" evidence="1">
    <location>
        <begin position="289"/>
        <end position="309"/>
    </location>
</feature>
<feature type="transmembrane region" description="Helical" evidence="1">
    <location>
        <begin position="338"/>
        <end position="358"/>
    </location>
</feature>
<reference key="1">
    <citation type="submission" date="2008-02" db="EMBL/GenBank/DDBJ databases">
        <title>Complete sequence of chromosome of Methylobacterium sp. 4-46.</title>
        <authorList>
            <consortium name="US DOE Joint Genome Institute"/>
            <person name="Copeland A."/>
            <person name="Lucas S."/>
            <person name="Lapidus A."/>
            <person name="Glavina del Rio T."/>
            <person name="Dalin E."/>
            <person name="Tice H."/>
            <person name="Bruce D."/>
            <person name="Goodwin L."/>
            <person name="Pitluck S."/>
            <person name="Chertkov O."/>
            <person name="Brettin T."/>
            <person name="Detter J.C."/>
            <person name="Han C."/>
            <person name="Kuske C.R."/>
            <person name="Schmutz J."/>
            <person name="Larimer F."/>
            <person name="Land M."/>
            <person name="Hauser L."/>
            <person name="Kyrpides N."/>
            <person name="Ivanova N."/>
            <person name="Marx C.J."/>
            <person name="Richardson P."/>
        </authorList>
    </citation>
    <scope>NUCLEOTIDE SEQUENCE [LARGE SCALE GENOMIC DNA]</scope>
    <source>
        <strain>4-46</strain>
    </source>
</reference>
<protein>
    <recommendedName>
        <fullName evidence="1">Phospho-N-acetylmuramoyl-pentapeptide-transferase</fullName>
        <ecNumber evidence="1">2.7.8.13</ecNumber>
    </recommendedName>
    <alternativeName>
        <fullName evidence="1">UDP-MurNAc-pentapeptide phosphotransferase</fullName>
    </alternativeName>
</protein>
<organism>
    <name type="scientific">Methylobacterium sp. (strain 4-46)</name>
    <dbReference type="NCBI Taxonomy" id="426117"/>
    <lineage>
        <taxon>Bacteria</taxon>
        <taxon>Pseudomonadati</taxon>
        <taxon>Pseudomonadota</taxon>
        <taxon>Alphaproteobacteria</taxon>
        <taxon>Hyphomicrobiales</taxon>
        <taxon>Methylobacteriaceae</taxon>
        <taxon>Methylobacterium</taxon>
    </lineage>
</organism>